<sequence length="359" mass="40499">MTVLIHVLGSDIPHHNRTVLRFFNDALAATSGHAREFMVAGKDDGLSDSCPALSVQFFPGKKSLAEAVIAKAKANRQQRFFFHGQFNPKLWLALLSGGIKPSQFFWHIWGADLYELSSGLRYKLFYPLRRLAQKRVGCVFATRGDLSFFAKTHPKVRGELLYFPTRMDPSLNTMANDRQREGKMTILVGNSGDRSNEHIAALRAVHQQFGDTVKVVVPMGYPPNNEAYIEEVRQAGLELFSEENLQVLSEKLEFDAYLTLLRQCDLGYFIFARQQGIGTLCLLIQAGIPCVLNRENPFWQDMTEQHLPVLFTTDDLNEDIVREAQRQLASVDKNTIAFFSPNYLQGWQRALAIAAGEVA</sequence>
<keyword id="KW-0997">Cell inner membrane</keyword>
<keyword id="KW-1003">Cell membrane</keyword>
<keyword id="KW-0328">Glycosyltransferase</keyword>
<keyword id="KW-0472">Membrane</keyword>
<keyword id="KW-0808">Transferase</keyword>
<name>WECF_ECOUT</name>
<gene>
    <name evidence="1" type="primary">wecF</name>
    <name evidence="1" type="synonym">rffT</name>
    <name type="ordered locus">UTI89_C4350</name>
</gene>
<comment type="function">
    <text evidence="1">Catalyzes the synthesis of Und-PP-GlcNAc-ManNAcA-Fuc4NAc (Lipid III), the third lipid-linked intermediate involved in ECA synthesis.</text>
</comment>
<comment type="catalytic activity">
    <reaction evidence="1">
        <text>beta-D-ManNAcA-(1-&gt;4)-alpha-D-GlcNAc-di-trans,octa-cis-undecaprenyl diphosphate + dTDP-4-acetamido-4,6-dideoxy-alpha-D-galactose = alpha-D-FucNAc4-(1-&gt;4)-beta-D-ManNAcA-(1-&gt;4)-D-GlcNAc-undecaprenyl diphosphate + dTDP + H(+)</text>
        <dbReference type="Rhea" id="RHEA:28759"/>
        <dbReference type="ChEBI" id="CHEBI:15378"/>
        <dbReference type="ChEBI" id="CHEBI:58369"/>
        <dbReference type="ChEBI" id="CHEBI:61495"/>
        <dbReference type="ChEBI" id="CHEBI:61496"/>
        <dbReference type="ChEBI" id="CHEBI:68493"/>
        <dbReference type="EC" id="2.4.1.325"/>
    </reaction>
</comment>
<comment type="pathway">
    <text evidence="1">Bacterial outer membrane biogenesis; enterobacterial common antigen biosynthesis.</text>
</comment>
<comment type="subcellular location">
    <subcellularLocation>
        <location evidence="1">Cell inner membrane</location>
        <topology evidence="1">Peripheral membrane protein</topology>
    </subcellularLocation>
</comment>
<comment type="similarity">
    <text evidence="1">Belongs to the glycosyltransferase 56 family.</text>
</comment>
<reference key="1">
    <citation type="journal article" date="2006" name="Proc. Natl. Acad. Sci. U.S.A.">
        <title>Identification of genes subject to positive selection in uropathogenic strains of Escherichia coli: a comparative genomics approach.</title>
        <authorList>
            <person name="Chen S.L."/>
            <person name="Hung C.-S."/>
            <person name="Xu J."/>
            <person name="Reigstad C.S."/>
            <person name="Magrini V."/>
            <person name="Sabo A."/>
            <person name="Blasiar D."/>
            <person name="Bieri T."/>
            <person name="Meyer R.R."/>
            <person name="Ozersky P."/>
            <person name="Armstrong J.R."/>
            <person name="Fulton R.S."/>
            <person name="Latreille J.P."/>
            <person name="Spieth J."/>
            <person name="Hooton T.M."/>
            <person name="Mardis E.R."/>
            <person name="Hultgren S.J."/>
            <person name="Gordon J.I."/>
        </authorList>
    </citation>
    <scope>NUCLEOTIDE SEQUENCE [LARGE SCALE GENOMIC DNA]</scope>
    <source>
        <strain>UTI89 / UPEC</strain>
    </source>
</reference>
<accession>Q1R4E3</accession>
<feature type="chain" id="PRO_1000062744" description="TDP-N-acetylfucosamine:lipid II N-acetylfucosaminyltransferase">
    <location>
        <begin position="1"/>
        <end position="359"/>
    </location>
</feature>
<evidence type="ECO:0000255" key="1">
    <source>
        <dbReference type="HAMAP-Rule" id="MF_01002"/>
    </source>
</evidence>
<protein>
    <recommendedName>
        <fullName evidence="1">TDP-N-acetylfucosamine:lipid II N-acetylfucosaminyltransferase</fullName>
        <ecNumber evidence="1">2.4.1.325</ecNumber>
    </recommendedName>
    <alternativeName>
        <fullName evidence="1">4-alpha-L-fucosyltransferase</fullName>
    </alternativeName>
    <alternativeName>
        <fullName evidence="1">TDP-Fuc4NAc:lipid II Fuc4NAc transferase</fullName>
        <shortName evidence="1">Fuc4NAc transferase</shortName>
    </alternativeName>
</protein>
<organism>
    <name type="scientific">Escherichia coli (strain UTI89 / UPEC)</name>
    <dbReference type="NCBI Taxonomy" id="364106"/>
    <lineage>
        <taxon>Bacteria</taxon>
        <taxon>Pseudomonadati</taxon>
        <taxon>Pseudomonadota</taxon>
        <taxon>Gammaproteobacteria</taxon>
        <taxon>Enterobacterales</taxon>
        <taxon>Enterobacteriaceae</taxon>
        <taxon>Escherichia</taxon>
    </lineage>
</organism>
<proteinExistence type="inferred from homology"/>
<dbReference type="EC" id="2.4.1.325" evidence="1"/>
<dbReference type="EMBL" id="CP000243">
    <property type="protein sequence ID" value="ABE09771.1"/>
    <property type="molecule type" value="Genomic_DNA"/>
</dbReference>
<dbReference type="RefSeq" id="WP_000217276.1">
    <property type="nucleotide sequence ID" value="NZ_CP064825.1"/>
</dbReference>
<dbReference type="SMR" id="Q1R4E3"/>
<dbReference type="CAZy" id="GT56">
    <property type="family name" value="Glycosyltransferase Family 56"/>
</dbReference>
<dbReference type="KEGG" id="eci:UTI89_C4350"/>
<dbReference type="HOGENOM" id="CLU_066584_0_0_6"/>
<dbReference type="UniPathway" id="UPA00566"/>
<dbReference type="Proteomes" id="UP000001952">
    <property type="component" value="Chromosome"/>
</dbReference>
<dbReference type="GO" id="GO:0005886">
    <property type="term" value="C:plasma membrane"/>
    <property type="evidence" value="ECO:0007669"/>
    <property type="project" value="UniProtKB-SubCell"/>
</dbReference>
<dbReference type="GO" id="GO:0102031">
    <property type="term" value="F:4-acetamido-4,6-dideoxy-D-galactose transferase activity"/>
    <property type="evidence" value="ECO:0007669"/>
    <property type="project" value="UniProtKB-EC"/>
</dbReference>
<dbReference type="GO" id="GO:0008417">
    <property type="term" value="F:fucosyltransferase activity"/>
    <property type="evidence" value="ECO:0007669"/>
    <property type="project" value="InterPro"/>
</dbReference>
<dbReference type="GO" id="GO:0009246">
    <property type="term" value="P:enterobacterial common antigen biosynthetic process"/>
    <property type="evidence" value="ECO:0007669"/>
    <property type="project" value="UniProtKB-UniRule"/>
</dbReference>
<dbReference type="GO" id="GO:0036065">
    <property type="term" value="P:fucosylation"/>
    <property type="evidence" value="ECO:0007669"/>
    <property type="project" value="InterPro"/>
</dbReference>
<dbReference type="HAMAP" id="MF_01002">
    <property type="entry name" value="WecF_RffT"/>
    <property type="match status" value="1"/>
</dbReference>
<dbReference type="InterPro" id="IPR009993">
    <property type="entry name" value="WecF"/>
</dbReference>
<dbReference type="NCBIfam" id="NF002752">
    <property type="entry name" value="PRK02797.1-1"/>
    <property type="match status" value="1"/>
</dbReference>
<dbReference type="NCBIfam" id="NF002753">
    <property type="entry name" value="PRK02797.1-2"/>
    <property type="match status" value="1"/>
</dbReference>
<dbReference type="NCBIfam" id="NF002754">
    <property type="entry name" value="PRK02797.1-3"/>
    <property type="match status" value="1"/>
</dbReference>
<dbReference type="Pfam" id="PF07429">
    <property type="entry name" value="Glyco_transf_56"/>
    <property type="match status" value="1"/>
</dbReference>